<gene>
    <name evidence="1" type="primary">tnaA</name>
    <name type="ordered locus">EcSMS35_4075</name>
</gene>
<keyword id="KW-0007">Acetylation</keyword>
<keyword id="KW-0456">Lyase</keyword>
<keyword id="KW-0663">Pyridoxal phosphate</keyword>
<keyword id="KW-0823">Tryptophan catabolism</keyword>
<accession>B1LL35</accession>
<protein>
    <recommendedName>
        <fullName evidence="1">Tryptophanase</fullName>
        <ecNumber evidence="1">4.1.99.1</ecNumber>
    </recommendedName>
    <alternativeName>
        <fullName evidence="1">L-tryptophan indole-lyase</fullName>
        <shortName evidence="1">TNase</shortName>
    </alternativeName>
</protein>
<reference key="1">
    <citation type="journal article" date="2008" name="J. Bacteriol.">
        <title>Insights into the environmental resistance gene pool from the genome sequence of the multidrug-resistant environmental isolate Escherichia coli SMS-3-5.</title>
        <authorList>
            <person name="Fricke W.F."/>
            <person name="Wright M.S."/>
            <person name="Lindell A.H."/>
            <person name="Harkins D.M."/>
            <person name="Baker-Austin C."/>
            <person name="Ravel J."/>
            <person name="Stepanauskas R."/>
        </authorList>
    </citation>
    <scope>NUCLEOTIDE SEQUENCE [LARGE SCALE GENOMIC DNA]</scope>
    <source>
        <strain>SMS-3-5 / SECEC</strain>
    </source>
</reference>
<sequence length="471" mass="52741">MENFKHLPEPFRIRVIEPVKRTTRAYREEAIIKSGMNPFLLDSEDVFIDLLTDSGTGAVTQSMQAAMMRGDEAYSGSRSYYALAESVKNIFGYQYTIPTHQGRGAEQIYIPVLIKKREQEKGLDRSKMVAFSNYFFDTTQGHSQINGCTVRNVYIKEAFDTGVRYDFKGNFDLEGLERGIEEVGPNNVPYIVATITSNSAGGQPVSLANLKAMYSIAKKYDIPVVMDSARFAENAYFIKQREAEYKDWTIEQITRETYKYADMLAMSAKKDAMVPMGGLLCVKDDSFFDVYTECRTLCVVQEGFPTYGGLEGGAMERLAVGLYDGMNLDWLAYRIAQVQYLVDGLEEIGVVCQQAGGHAAFVDAGKLLPHIPADQFPAQALACELYKVAGIRAVEIGSFLLGRDPKTGKQLPCPAELLRLTIPRATYTQTHMDFIIEAFKHVKENAANIKGLTFTYEPKVLRHFTAKLKEV</sequence>
<dbReference type="EC" id="4.1.99.1" evidence="1"/>
<dbReference type="EMBL" id="CP000970">
    <property type="protein sequence ID" value="ACB17583.1"/>
    <property type="molecule type" value="Genomic_DNA"/>
</dbReference>
<dbReference type="RefSeq" id="WP_001365206.1">
    <property type="nucleotide sequence ID" value="NC_010498.1"/>
</dbReference>
<dbReference type="SMR" id="B1LL35"/>
<dbReference type="KEGG" id="ecm:EcSMS35_4075"/>
<dbReference type="HOGENOM" id="CLU_047223_0_0_6"/>
<dbReference type="UniPathway" id="UPA00332">
    <property type="reaction ID" value="UER00452"/>
</dbReference>
<dbReference type="Proteomes" id="UP000007011">
    <property type="component" value="Chromosome"/>
</dbReference>
<dbReference type="GO" id="GO:0009034">
    <property type="term" value="F:tryptophanase activity"/>
    <property type="evidence" value="ECO:0007669"/>
    <property type="project" value="UniProtKB-UniRule"/>
</dbReference>
<dbReference type="FunFam" id="3.40.640.10:FF:000039">
    <property type="entry name" value="Tryptophanase"/>
    <property type="match status" value="1"/>
</dbReference>
<dbReference type="Gene3D" id="3.90.1150.10">
    <property type="entry name" value="Aspartate Aminotransferase, domain 1"/>
    <property type="match status" value="1"/>
</dbReference>
<dbReference type="Gene3D" id="3.40.640.10">
    <property type="entry name" value="Type I PLP-dependent aspartate aminotransferase-like (Major domain)"/>
    <property type="match status" value="1"/>
</dbReference>
<dbReference type="HAMAP" id="MF_00544">
    <property type="entry name" value="Tryptophanase"/>
    <property type="match status" value="1"/>
</dbReference>
<dbReference type="InterPro" id="IPR001597">
    <property type="entry name" value="ArAA_b-elim_lyase/Thr_aldolase"/>
</dbReference>
<dbReference type="InterPro" id="IPR011166">
    <property type="entry name" value="Beta-eliminating_lyase"/>
</dbReference>
<dbReference type="InterPro" id="IPR015424">
    <property type="entry name" value="PyrdxlP-dep_Trfase"/>
</dbReference>
<dbReference type="InterPro" id="IPR015421">
    <property type="entry name" value="PyrdxlP-dep_Trfase_major"/>
</dbReference>
<dbReference type="InterPro" id="IPR015422">
    <property type="entry name" value="PyrdxlP-dep_Trfase_small"/>
</dbReference>
<dbReference type="InterPro" id="IPR013440">
    <property type="entry name" value="TNase"/>
</dbReference>
<dbReference type="InterPro" id="IPR018176">
    <property type="entry name" value="Tryptophanase_CS"/>
</dbReference>
<dbReference type="NCBIfam" id="NF009709">
    <property type="entry name" value="PRK13238.1"/>
    <property type="match status" value="1"/>
</dbReference>
<dbReference type="NCBIfam" id="TIGR02617">
    <property type="entry name" value="tnaA_trp_ase"/>
    <property type="match status" value="1"/>
</dbReference>
<dbReference type="PANTHER" id="PTHR32325">
    <property type="entry name" value="BETA-ELIMINATING LYASE-LIKE PROTEIN-RELATED"/>
    <property type="match status" value="1"/>
</dbReference>
<dbReference type="PANTHER" id="PTHR32325:SF4">
    <property type="entry name" value="TRYPTOPHANASE"/>
    <property type="match status" value="1"/>
</dbReference>
<dbReference type="Pfam" id="PF01212">
    <property type="entry name" value="Beta_elim_lyase"/>
    <property type="match status" value="1"/>
</dbReference>
<dbReference type="PIRSF" id="PIRSF001386">
    <property type="entry name" value="Trpase"/>
    <property type="match status" value="1"/>
</dbReference>
<dbReference type="SUPFAM" id="SSF53383">
    <property type="entry name" value="PLP-dependent transferases"/>
    <property type="match status" value="1"/>
</dbReference>
<dbReference type="PROSITE" id="PS00853">
    <property type="entry name" value="BETA_ELIM_LYASE"/>
    <property type="match status" value="1"/>
</dbReference>
<organism>
    <name type="scientific">Escherichia coli (strain SMS-3-5 / SECEC)</name>
    <dbReference type="NCBI Taxonomy" id="439855"/>
    <lineage>
        <taxon>Bacteria</taxon>
        <taxon>Pseudomonadati</taxon>
        <taxon>Pseudomonadota</taxon>
        <taxon>Gammaproteobacteria</taxon>
        <taxon>Enterobacterales</taxon>
        <taxon>Enterobacteriaceae</taxon>
        <taxon>Escherichia</taxon>
    </lineage>
</organism>
<proteinExistence type="inferred from homology"/>
<comment type="catalytic activity">
    <reaction evidence="1">
        <text>L-tryptophan + H2O = indole + pyruvate + NH4(+)</text>
        <dbReference type="Rhea" id="RHEA:19553"/>
        <dbReference type="ChEBI" id="CHEBI:15361"/>
        <dbReference type="ChEBI" id="CHEBI:15377"/>
        <dbReference type="ChEBI" id="CHEBI:16881"/>
        <dbReference type="ChEBI" id="CHEBI:28938"/>
        <dbReference type="ChEBI" id="CHEBI:57912"/>
        <dbReference type="EC" id="4.1.99.1"/>
    </reaction>
</comment>
<comment type="cofactor">
    <cofactor evidence="1">
        <name>pyridoxal 5'-phosphate</name>
        <dbReference type="ChEBI" id="CHEBI:597326"/>
    </cofactor>
</comment>
<comment type="pathway">
    <text evidence="1">Amino-acid degradation; L-tryptophan degradation via pyruvate pathway; indole and pyruvate from L-tryptophan: step 1/1.</text>
</comment>
<comment type="subunit">
    <text evidence="1">Homotetramer.</text>
</comment>
<comment type="similarity">
    <text evidence="1">Belongs to the beta-eliminating lyase family.</text>
</comment>
<name>TNAA_ECOSM</name>
<evidence type="ECO:0000255" key="1">
    <source>
        <dbReference type="HAMAP-Rule" id="MF_00544"/>
    </source>
</evidence>
<feature type="chain" id="PRO_1000128913" description="Tryptophanase">
    <location>
        <begin position="1"/>
        <end position="471"/>
    </location>
</feature>
<feature type="modified residue" description="N6-acetyllysine" evidence="1">
    <location>
        <position position="5"/>
    </location>
</feature>
<feature type="modified residue" description="N6-acetyllysine" evidence="1">
    <location>
        <position position="115"/>
    </location>
</feature>
<feature type="modified residue" description="N6-acetyllysine" evidence="1">
    <location>
        <position position="156"/>
    </location>
</feature>
<feature type="modified residue" description="N6-(pyridoxal phosphate)lysine" evidence="1">
    <location>
        <position position="270"/>
    </location>
</feature>
<feature type="modified residue" description="N6-acetyllysine" evidence="1">
    <location>
        <position position="450"/>
    </location>
</feature>